<reference key="1">
    <citation type="journal article" date="2012" name="Stand. Genomic Sci.">
        <title>Complete genome sequence of Polynucleobacter necessarius subsp. asymbioticus type strain (QLW-P1DMWA-1(T)).</title>
        <authorList>
            <person name="Meincke L."/>
            <person name="Copeland A."/>
            <person name="Lapidus A."/>
            <person name="Lucas S."/>
            <person name="Berry K.W."/>
            <person name="Del Rio T.G."/>
            <person name="Hammon N."/>
            <person name="Dalin E."/>
            <person name="Tice H."/>
            <person name="Pitluck S."/>
            <person name="Richardson P."/>
            <person name="Bruce D."/>
            <person name="Goodwin L."/>
            <person name="Han C."/>
            <person name="Tapia R."/>
            <person name="Detter J.C."/>
            <person name="Schmutz J."/>
            <person name="Brettin T."/>
            <person name="Larimer F."/>
            <person name="Land M."/>
            <person name="Hauser L."/>
            <person name="Kyrpides N.C."/>
            <person name="Ivanova N."/>
            <person name="Goker M."/>
            <person name="Woyke T."/>
            <person name="Wu Q.L."/>
            <person name="Pockl M."/>
            <person name="Hahn M.W."/>
            <person name="Klenk H.P."/>
        </authorList>
    </citation>
    <scope>NUCLEOTIDE SEQUENCE [LARGE SCALE GENOMIC DNA]</scope>
    <source>
        <strain>DSM 18221 / CIP 109841 / QLW-P1DMWA-1</strain>
    </source>
</reference>
<gene>
    <name evidence="1" type="primary">rpsB</name>
    <name type="ordered locus">Pnuc_1451</name>
</gene>
<organism>
    <name type="scientific">Polynucleobacter asymbioticus (strain DSM 18221 / CIP 109841 / QLW-P1DMWA-1)</name>
    <name type="common">Polynucleobacter necessarius subsp. asymbioticus</name>
    <dbReference type="NCBI Taxonomy" id="312153"/>
    <lineage>
        <taxon>Bacteria</taxon>
        <taxon>Pseudomonadati</taxon>
        <taxon>Pseudomonadota</taxon>
        <taxon>Betaproteobacteria</taxon>
        <taxon>Burkholderiales</taxon>
        <taxon>Burkholderiaceae</taxon>
        <taxon>Polynucleobacter</taxon>
    </lineage>
</organism>
<sequence length="249" mass="27451">MSVTMRQMLEAGCHFGHQTRFWSPKMAPFIFGHRNKIHIINLEKTLPMFQDALKFAKQVASNRGTILFVGTKRQSREIIAEEAARAGMPYIDSRWLGGTLTNFKTVKGSLKRLKDMAVAKEAGDWEKLSKKEALTNDRDLDKLQKALGGIQDLNGVPDAIFVVDVGYHKIAITEANKLGIPVIAVVDTNHSPEGVDYIIPGNDDSSKAVLLYARGIADAILEGKANSVQEILTAVKEGEEEFVEEGKAE</sequence>
<keyword id="KW-1185">Reference proteome</keyword>
<keyword id="KW-0687">Ribonucleoprotein</keyword>
<keyword id="KW-0689">Ribosomal protein</keyword>
<accession>A4SYV1</accession>
<proteinExistence type="inferred from homology"/>
<dbReference type="EMBL" id="CP000655">
    <property type="protein sequence ID" value="ABP34665.1"/>
    <property type="molecule type" value="Genomic_DNA"/>
</dbReference>
<dbReference type="RefSeq" id="WP_011903288.1">
    <property type="nucleotide sequence ID" value="NC_009379.1"/>
</dbReference>
<dbReference type="SMR" id="A4SYV1"/>
<dbReference type="GeneID" id="31481841"/>
<dbReference type="KEGG" id="pnu:Pnuc_1451"/>
<dbReference type="eggNOG" id="COG0052">
    <property type="taxonomic scope" value="Bacteria"/>
</dbReference>
<dbReference type="HOGENOM" id="CLU_040318_1_2_4"/>
<dbReference type="Proteomes" id="UP000000231">
    <property type="component" value="Chromosome"/>
</dbReference>
<dbReference type="GO" id="GO:0022627">
    <property type="term" value="C:cytosolic small ribosomal subunit"/>
    <property type="evidence" value="ECO:0007669"/>
    <property type="project" value="TreeGrafter"/>
</dbReference>
<dbReference type="GO" id="GO:0003735">
    <property type="term" value="F:structural constituent of ribosome"/>
    <property type="evidence" value="ECO:0007669"/>
    <property type="project" value="InterPro"/>
</dbReference>
<dbReference type="GO" id="GO:0006412">
    <property type="term" value="P:translation"/>
    <property type="evidence" value="ECO:0007669"/>
    <property type="project" value="UniProtKB-UniRule"/>
</dbReference>
<dbReference type="CDD" id="cd01425">
    <property type="entry name" value="RPS2"/>
    <property type="match status" value="1"/>
</dbReference>
<dbReference type="FunFam" id="1.10.287.610:FF:000001">
    <property type="entry name" value="30S ribosomal protein S2"/>
    <property type="match status" value="1"/>
</dbReference>
<dbReference type="Gene3D" id="3.40.50.10490">
    <property type="entry name" value="Glucose-6-phosphate isomerase like protein, domain 1"/>
    <property type="match status" value="1"/>
</dbReference>
<dbReference type="Gene3D" id="1.10.287.610">
    <property type="entry name" value="Helix hairpin bin"/>
    <property type="match status" value="1"/>
</dbReference>
<dbReference type="HAMAP" id="MF_00291_B">
    <property type="entry name" value="Ribosomal_uS2_B"/>
    <property type="match status" value="1"/>
</dbReference>
<dbReference type="InterPro" id="IPR001865">
    <property type="entry name" value="Ribosomal_uS2"/>
</dbReference>
<dbReference type="InterPro" id="IPR005706">
    <property type="entry name" value="Ribosomal_uS2_bac/mit/plastid"/>
</dbReference>
<dbReference type="InterPro" id="IPR023591">
    <property type="entry name" value="Ribosomal_uS2_flav_dom_sf"/>
</dbReference>
<dbReference type="NCBIfam" id="TIGR01011">
    <property type="entry name" value="rpsB_bact"/>
    <property type="match status" value="1"/>
</dbReference>
<dbReference type="PANTHER" id="PTHR12534">
    <property type="entry name" value="30S RIBOSOMAL PROTEIN S2 PROKARYOTIC AND ORGANELLAR"/>
    <property type="match status" value="1"/>
</dbReference>
<dbReference type="PANTHER" id="PTHR12534:SF0">
    <property type="entry name" value="SMALL RIBOSOMAL SUBUNIT PROTEIN US2M"/>
    <property type="match status" value="1"/>
</dbReference>
<dbReference type="Pfam" id="PF00318">
    <property type="entry name" value="Ribosomal_S2"/>
    <property type="match status" value="1"/>
</dbReference>
<dbReference type="PRINTS" id="PR00395">
    <property type="entry name" value="RIBOSOMALS2"/>
</dbReference>
<dbReference type="SUPFAM" id="SSF52313">
    <property type="entry name" value="Ribosomal protein S2"/>
    <property type="match status" value="1"/>
</dbReference>
<evidence type="ECO:0000255" key="1">
    <source>
        <dbReference type="HAMAP-Rule" id="MF_00291"/>
    </source>
</evidence>
<evidence type="ECO:0000305" key="2"/>
<name>RS2_POLAQ</name>
<feature type="chain" id="PRO_1000078891" description="Small ribosomal subunit protein uS2">
    <location>
        <begin position="1"/>
        <end position="249"/>
    </location>
</feature>
<comment type="similarity">
    <text evidence="1">Belongs to the universal ribosomal protein uS2 family.</text>
</comment>
<protein>
    <recommendedName>
        <fullName evidence="1">Small ribosomal subunit protein uS2</fullName>
    </recommendedName>
    <alternativeName>
        <fullName evidence="2">30S ribosomal protein S2</fullName>
    </alternativeName>
</protein>